<dbReference type="EMBL" id="AL136867">
    <property type="protein sequence ID" value="CAB66801.1"/>
    <property type="molecule type" value="mRNA"/>
</dbReference>
<dbReference type="EMBL" id="AK057466">
    <property type="protein sequence ID" value="BAB71500.1"/>
    <property type="molecule type" value="mRNA"/>
</dbReference>
<dbReference type="EMBL" id="AK302431">
    <property type="protein sequence ID" value="BAG63734.1"/>
    <property type="molecule type" value="mRNA"/>
</dbReference>
<dbReference type="EMBL" id="AC008397">
    <property type="status" value="NOT_ANNOTATED_CDS"/>
    <property type="molecule type" value="Genomic_DNA"/>
</dbReference>
<dbReference type="EMBL" id="BC034327">
    <property type="protein sequence ID" value="AAH34327.1"/>
    <property type="molecule type" value="mRNA"/>
</dbReference>
<dbReference type="EMBL" id="BC112932">
    <property type="protein sequence ID" value="AAI12933.1"/>
    <property type="molecule type" value="mRNA"/>
</dbReference>
<dbReference type="EMBL" id="AB051470">
    <property type="protein sequence ID" value="BAB21774.1"/>
    <property type="status" value="ALT_SEQ"/>
    <property type="molecule type" value="mRNA"/>
</dbReference>
<dbReference type="CCDS" id="CCDS32958.1">
    <molecule id="Q9H0B3-1"/>
</dbReference>
<dbReference type="CCDS" id="CCDS46017.1">
    <molecule id="Q9H0B3-4"/>
</dbReference>
<dbReference type="CCDS" id="CCDS46018.1">
    <molecule id="Q9H0B3-5"/>
</dbReference>
<dbReference type="RefSeq" id="NP_001138776.1">
    <molecule id="Q9H0B3-4"/>
    <property type="nucleotide sequence ID" value="NM_001145304.2"/>
</dbReference>
<dbReference type="RefSeq" id="NP_001138777.1">
    <molecule id="Q9H0B3-5"/>
    <property type="nucleotide sequence ID" value="NM_001145305.2"/>
</dbReference>
<dbReference type="RefSeq" id="NP_079525.1">
    <molecule id="Q9H0B3-1"/>
    <property type="nucleotide sequence ID" value="NM_025249.4"/>
</dbReference>
<dbReference type="RefSeq" id="XP_005260141.1">
    <molecule id="Q9H0B3-4"/>
    <property type="nucleotide sequence ID" value="XM_005260084.2"/>
</dbReference>
<dbReference type="RefSeq" id="XP_054178215.1">
    <molecule id="Q9H0B3-4"/>
    <property type="nucleotide sequence ID" value="XM_054322240.1"/>
</dbReference>
<dbReference type="BioGRID" id="123276">
    <property type="interactions" value="74"/>
</dbReference>
<dbReference type="FunCoup" id="Q9H0B3">
    <property type="interactions" value="656"/>
</dbReference>
<dbReference type="IntAct" id="Q9H0B3">
    <property type="interactions" value="63"/>
</dbReference>
<dbReference type="MINT" id="Q9H0B3"/>
<dbReference type="STRING" id="9606.ENSP00000376213"/>
<dbReference type="GlyGen" id="Q9H0B3">
    <property type="glycosylation" value="2 sites, 1 O-linked glycan (1 site)"/>
</dbReference>
<dbReference type="iPTMnet" id="Q9H0B3"/>
<dbReference type="PhosphoSitePlus" id="Q9H0B3"/>
<dbReference type="BioMuta" id="KIAA1683"/>
<dbReference type="DMDM" id="73920083"/>
<dbReference type="jPOST" id="Q9H0B3"/>
<dbReference type="MassIVE" id="Q9H0B3"/>
<dbReference type="PeptideAtlas" id="Q9H0B3"/>
<dbReference type="ProteomicsDB" id="19643"/>
<dbReference type="ProteomicsDB" id="20458"/>
<dbReference type="ProteomicsDB" id="80240">
    <molecule id="Q9H0B3-1"/>
</dbReference>
<dbReference type="ProteomicsDB" id="80241">
    <molecule id="Q9H0B3-2"/>
</dbReference>
<dbReference type="ProteomicsDB" id="80242">
    <molecule id="Q9H0B3-3"/>
</dbReference>
<dbReference type="Antibodypedia" id="51823">
    <property type="antibodies" value="21 antibodies from 10 providers"/>
</dbReference>
<dbReference type="DNASU" id="80726"/>
<dbReference type="Ensembl" id="ENST00000392413.5">
    <molecule id="Q9H0B3-4"/>
    <property type="protein sequence ID" value="ENSP00000376213.2"/>
    <property type="gene ID" value="ENSG00000130518.18"/>
</dbReference>
<dbReference type="Ensembl" id="ENST00000600328.7">
    <molecule id="Q9H0B3-1"/>
    <property type="protein sequence ID" value="ENSP00000470780.1"/>
    <property type="gene ID" value="ENSG00000130518.18"/>
</dbReference>
<dbReference type="Ensembl" id="ENST00000600359.7">
    <molecule id="Q9H0B3-5"/>
    <property type="protein sequence ID" value="ENSP00000472912.1"/>
    <property type="gene ID" value="ENSG00000130518.18"/>
</dbReference>
<dbReference type="GeneID" id="80726"/>
<dbReference type="KEGG" id="hsa:80726"/>
<dbReference type="MANE-Select" id="ENST00000392413.5">
    <molecule id="Q9H0B3-4"/>
    <property type="protein sequence ID" value="ENSP00000376213.2"/>
    <property type="RefSeq nucleotide sequence ID" value="NM_001145304.2"/>
    <property type="RefSeq protein sequence ID" value="NP_001138776.1"/>
</dbReference>
<dbReference type="UCSC" id="uc002nin.3">
    <molecule id="Q9H0B3-1"/>
    <property type="organism name" value="human"/>
</dbReference>
<dbReference type="AGR" id="HGNC:29350"/>
<dbReference type="CTD" id="80726"/>
<dbReference type="DisGeNET" id="80726"/>
<dbReference type="GeneCards" id="IQCN"/>
<dbReference type="HGNC" id="HGNC:29350">
    <property type="gene designation" value="IQCN"/>
</dbReference>
<dbReference type="HPA" id="ENSG00000130518">
    <property type="expression patterns" value="Tissue enriched (testis)"/>
</dbReference>
<dbReference type="MalaCards" id="IQCN"/>
<dbReference type="MIM" id="620160">
    <property type="type" value="gene"/>
</dbReference>
<dbReference type="MIM" id="620170">
    <property type="type" value="phenotype"/>
</dbReference>
<dbReference type="neXtProt" id="NX_Q9H0B3"/>
<dbReference type="OpenTargets" id="ENSG00000130518"/>
<dbReference type="PharmGKB" id="PA134952902"/>
<dbReference type="VEuPathDB" id="HostDB:ENSG00000130518"/>
<dbReference type="eggNOG" id="ENOG502SCUX">
    <property type="taxonomic scope" value="Eukaryota"/>
</dbReference>
<dbReference type="GeneTree" id="ENSGT00940000156018"/>
<dbReference type="HOGENOM" id="CLU_008587_0_0_1"/>
<dbReference type="InParanoid" id="Q9H0B3"/>
<dbReference type="OMA" id="ITAKHQP"/>
<dbReference type="OrthoDB" id="252964at2759"/>
<dbReference type="PAN-GO" id="Q9H0B3">
    <property type="GO annotations" value="0 GO annotations based on evolutionary models"/>
</dbReference>
<dbReference type="PhylomeDB" id="Q9H0B3"/>
<dbReference type="TreeFam" id="TF337595"/>
<dbReference type="PathwayCommons" id="Q9H0B3"/>
<dbReference type="SignaLink" id="Q9H0B3"/>
<dbReference type="BioGRID-ORCS" id="80726">
    <property type="hits" value="20 hits in 1143 CRISPR screens"/>
</dbReference>
<dbReference type="CD-CODE" id="1A18FFC4">
    <property type="entry name" value="Paraspeckle"/>
</dbReference>
<dbReference type="ChiTaRS" id="KIAA1683">
    <property type="organism name" value="human"/>
</dbReference>
<dbReference type="GeneWiki" id="KIAA1683"/>
<dbReference type="GenomeRNAi" id="80726"/>
<dbReference type="Pharos" id="Q9H0B3">
    <property type="development level" value="Tdark"/>
</dbReference>
<dbReference type="PRO" id="PR:Q9H0B3"/>
<dbReference type="Proteomes" id="UP000005640">
    <property type="component" value="Chromosome 19"/>
</dbReference>
<dbReference type="RNAct" id="Q9H0B3">
    <property type="molecule type" value="protein"/>
</dbReference>
<dbReference type="Bgee" id="ENSG00000130518">
    <property type="expression patterns" value="Expressed in sural nerve and 105 other cell types or tissues"/>
</dbReference>
<dbReference type="ExpressionAtlas" id="Q9H0B3">
    <property type="expression patterns" value="baseline and differential"/>
</dbReference>
<dbReference type="GO" id="GO:0005739">
    <property type="term" value="C:mitochondrion"/>
    <property type="evidence" value="ECO:0000314"/>
    <property type="project" value="LIFEdb"/>
</dbReference>
<dbReference type="GO" id="GO:0005634">
    <property type="term" value="C:nucleus"/>
    <property type="evidence" value="ECO:0007005"/>
    <property type="project" value="UniProtKB"/>
</dbReference>
<dbReference type="GO" id="GO:0007286">
    <property type="term" value="P:spermatid development"/>
    <property type="evidence" value="ECO:0000315"/>
    <property type="project" value="UniProtKB"/>
</dbReference>
<dbReference type="CDD" id="cd23767">
    <property type="entry name" value="IQCD"/>
    <property type="match status" value="4"/>
</dbReference>
<dbReference type="FunFam" id="1.20.5.190:FF:000021">
    <property type="entry name" value="IQ motif containing N"/>
    <property type="match status" value="1"/>
</dbReference>
<dbReference type="FunFam" id="1.20.5.190:FF:000036">
    <property type="entry name" value="IQ motif containing N"/>
    <property type="match status" value="1"/>
</dbReference>
<dbReference type="FunFam" id="1.20.5.190:FF:000041">
    <property type="entry name" value="IQ motif containing N"/>
    <property type="match status" value="1"/>
</dbReference>
<dbReference type="Gene3D" id="1.20.5.190">
    <property type="match status" value="3"/>
</dbReference>
<dbReference type="InterPro" id="IPR052318">
    <property type="entry name" value="CellDiv_DevSignal_Domain"/>
</dbReference>
<dbReference type="InterPro" id="IPR000048">
    <property type="entry name" value="IQ_motif_EF-hand-BS"/>
</dbReference>
<dbReference type="InterPro" id="IPR027417">
    <property type="entry name" value="P-loop_NTPase"/>
</dbReference>
<dbReference type="PANTHER" id="PTHR22590:SF2">
    <property type="entry name" value="IQ DOMAIN-CONTAINING PROTEIN N"/>
    <property type="match status" value="1"/>
</dbReference>
<dbReference type="PANTHER" id="PTHR22590">
    <property type="entry name" value="MYOSIN MOTOR DOMAIN-CONTAINING PROTEIN"/>
    <property type="match status" value="1"/>
</dbReference>
<dbReference type="Pfam" id="PF00612">
    <property type="entry name" value="IQ"/>
    <property type="match status" value="6"/>
</dbReference>
<dbReference type="SMART" id="SM00015">
    <property type="entry name" value="IQ"/>
    <property type="match status" value="6"/>
</dbReference>
<dbReference type="SUPFAM" id="SSF52540">
    <property type="entry name" value="P-loop containing nucleoside triphosphate hydrolases"/>
    <property type="match status" value="2"/>
</dbReference>
<dbReference type="PROSITE" id="PS50096">
    <property type="entry name" value="IQ"/>
    <property type="match status" value="6"/>
</dbReference>
<protein>
    <recommendedName>
        <fullName evidence="11">IQ domain-containing protein N</fullName>
    </recommendedName>
</protein>
<reference key="1">
    <citation type="journal article" date="2001" name="Genome Res.">
        <title>Towards a catalog of human genes and proteins: sequencing and analysis of 500 novel complete protein coding human cDNAs.</title>
        <authorList>
            <person name="Wiemann S."/>
            <person name="Weil B."/>
            <person name="Wellenreuther R."/>
            <person name="Gassenhuber J."/>
            <person name="Glassl S."/>
            <person name="Ansorge W."/>
            <person name="Boecher M."/>
            <person name="Bloecker H."/>
            <person name="Bauersachs S."/>
            <person name="Blum H."/>
            <person name="Lauber J."/>
            <person name="Duesterhoeft A."/>
            <person name="Beyer A."/>
            <person name="Koehrer K."/>
            <person name="Strack N."/>
            <person name="Mewes H.-W."/>
            <person name="Ottenwaelder B."/>
            <person name="Obermaier B."/>
            <person name="Tampe J."/>
            <person name="Heubner D."/>
            <person name="Wambutt R."/>
            <person name="Korn B."/>
            <person name="Klein M."/>
            <person name="Poustka A."/>
        </authorList>
    </citation>
    <scope>NUCLEOTIDE SEQUENCE [LARGE SCALE MRNA] (ISOFORM 1)</scope>
    <source>
        <tissue>Testis</tissue>
    </source>
</reference>
<reference key="2">
    <citation type="journal article" date="2004" name="Nat. Genet.">
        <title>Complete sequencing and characterization of 21,243 full-length human cDNAs.</title>
        <authorList>
            <person name="Ota T."/>
            <person name="Suzuki Y."/>
            <person name="Nishikawa T."/>
            <person name="Otsuki T."/>
            <person name="Sugiyama T."/>
            <person name="Irie R."/>
            <person name="Wakamatsu A."/>
            <person name="Hayashi K."/>
            <person name="Sato H."/>
            <person name="Nagai K."/>
            <person name="Kimura K."/>
            <person name="Makita H."/>
            <person name="Sekine M."/>
            <person name="Obayashi M."/>
            <person name="Nishi T."/>
            <person name="Shibahara T."/>
            <person name="Tanaka T."/>
            <person name="Ishii S."/>
            <person name="Yamamoto J."/>
            <person name="Saito K."/>
            <person name="Kawai Y."/>
            <person name="Isono Y."/>
            <person name="Nakamura Y."/>
            <person name="Nagahari K."/>
            <person name="Murakami K."/>
            <person name="Yasuda T."/>
            <person name="Iwayanagi T."/>
            <person name="Wagatsuma M."/>
            <person name="Shiratori A."/>
            <person name="Sudo H."/>
            <person name="Hosoiri T."/>
            <person name="Kaku Y."/>
            <person name="Kodaira H."/>
            <person name="Kondo H."/>
            <person name="Sugawara M."/>
            <person name="Takahashi M."/>
            <person name="Kanda K."/>
            <person name="Yokoi T."/>
            <person name="Furuya T."/>
            <person name="Kikkawa E."/>
            <person name="Omura Y."/>
            <person name="Abe K."/>
            <person name="Kamihara K."/>
            <person name="Katsuta N."/>
            <person name="Sato K."/>
            <person name="Tanikawa M."/>
            <person name="Yamazaki M."/>
            <person name="Ninomiya K."/>
            <person name="Ishibashi T."/>
            <person name="Yamashita H."/>
            <person name="Murakawa K."/>
            <person name="Fujimori K."/>
            <person name="Tanai H."/>
            <person name="Kimata M."/>
            <person name="Watanabe M."/>
            <person name="Hiraoka S."/>
            <person name="Chiba Y."/>
            <person name="Ishida S."/>
            <person name="Ono Y."/>
            <person name="Takiguchi S."/>
            <person name="Watanabe S."/>
            <person name="Yosida M."/>
            <person name="Hotuta T."/>
            <person name="Kusano J."/>
            <person name="Kanehori K."/>
            <person name="Takahashi-Fujii A."/>
            <person name="Hara H."/>
            <person name="Tanase T.-O."/>
            <person name="Nomura Y."/>
            <person name="Togiya S."/>
            <person name="Komai F."/>
            <person name="Hara R."/>
            <person name="Takeuchi K."/>
            <person name="Arita M."/>
            <person name="Imose N."/>
            <person name="Musashino K."/>
            <person name="Yuuki H."/>
            <person name="Oshima A."/>
            <person name="Sasaki N."/>
            <person name="Aotsuka S."/>
            <person name="Yoshikawa Y."/>
            <person name="Matsunawa H."/>
            <person name="Ichihara T."/>
            <person name="Shiohata N."/>
            <person name="Sano S."/>
            <person name="Moriya S."/>
            <person name="Momiyama H."/>
            <person name="Satoh N."/>
            <person name="Takami S."/>
            <person name="Terashima Y."/>
            <person name="Suzuki O."/>
            <person name="Nakagawa S."/>
            <person name="Senoh A."/>
            <person name="Mizoguchi H."/>
            <person name="Goto Y."/>
            <person name="Shimizu F."/>
            <person name="Wakebe H."/>
            <person name="Hishigaki H."/>
            <person name="Watanabe T."/>
            <person name="Sugiyama A."/>
            <person name="Takemoto M."/>
            <person name="Kawakami B."/>
            <person name="Yamazaki M."/>
            <person name="Watanabe K."/>
            <person name="Kumagai A."/>
            <person name="Itakura S."/>
            <person name="Fukuzumi Y."/>
            <person name="Fujimori Y."/>
            <person name="Komiyama M."/>
            <person name="Tashiro H."/>
            <person name="Tanigami A."/>
            <person name="Fujiwara T."/>
            <person name="Ono T."/>
            <person name="Yamada K."/>
            <person name="Fujii Y."/>
            <person name="Ozaki K."/>
            <person name="Hirao M."/>
            <person name="Ohmori Y."/>
            <person name="Kawabata A."/>
            <person name="Hikiji T."/>
            <person name="Kobatake N."/>
            <person name="Inagaki H."/>
            <person name="Ikema Y."/>
            <person name="Okamoto S."/>
            <person name="Okitani R."/>
            <person name="Kawakami T."/>
            <person name="Noguchi S."/>
            <person name="Itoh T."/>
            <person name="Shigeta K."/>
            <person name="Senba T."/>
            <person name="Matsumura K."/>
            <person name="Nakajima Y."/>
            <person name="Mizuno T."/>
            <person name="Morinaga M."/>
            <person name="Sasaki M."/>
            <person name="Togashi T."/>
            <person name="Oyama M."/>
            <person name="Hata H."/>
            <person name="Watanabe M."/>
            <person name="Komatsu T."/>
            <person name="Mizushima-Sugano J."/>
            <person name="Satoh T."/>
            <person name="Shirai Y."/>
            <person name="Takahashi Y."/>
            <person name="Nakagawa K."/>
            <person name="Okumura K."/>
            <person name="Nagase T."/>
            <person name="Nomura N."/>
            <person name="Kikuchi H."/>
            <person name="Masuho Y."/>
            <person name="Yamashita R."/>
            <person name="Nakai K."/>
            <person name="Yada T."/>
            <person name="Nakamura Y."/>
            <person name="Ohara O."/>
            <person name="Isogai T."/>
            <person name="Sugano S."/>
        </authorList>
    </citation>
    <scope>NUCLEOTIDE SEQUENCE [LARGE SCALE MRNA] (ISOFORMS 2 AND 5)</scope>
    <scope>VARIANTS PRO-44; VAL-235; THR-285; THR-359; PRO-610; PHE-648 AND HIS-908</scope>
    <source>
        <tissue>Testis</tissue>
    </source>
</reference>
<reference key="3">
    <citation type="journal article" date="2004" name="Nature">
        <title>The DNA sequence and biology of human chromosome 19.</title>
        <authorList>
            <person name="Grimwood J."/>
            <person name="Gordon L.A."/>
            <person name="Olsen A.S."/>
            <person name="Terry A."/>
            <person name="Schmutz J."/>
            <person name="Lamerdin J.E."/>
            <person name="Hellsten U."/>
            <person name="Goodstein D."/>
            <person name="Couronne O."/>
            <person name="Tran-Gyamfi M."/>
            <person name="Aerts A."/>
            <person name="Altherr M."/>
            <person name="Ashworth L."/>
            <person name="Bajorek E."/>
            <person name="Black S."/>
            <person name="Branscomb E."/>
            <person name="Caenepeel S."/>
            <person name="Carrano A.V."/>
            <person name="Caoile C."/>
            <person name="Chan Y.M."/>
            <person name="Christensen M."/>
            <person name="Cleland C.A."/>
            <person name="Copeland A."/>
            <person name="Dalin E."/>
            <person name="Dehal P."/>
            <person name="Denys M."/>
            <person name="Detter J.C."/>
            <person name="Escobar J."/>
            <person name="Flowers D."/>
            <person name="Fotopulos D."/>
            <person name="Garcia C."/>
            <person name="Georgescu A.M."/>
            <person name="Glavina T."/>
            <person name="Gomez M."/>
            <person name="Gonzales E."/>
            <person name="Groza M."/>
            <person name="Hammon N."/>
            <person name="Hawkins T."/>
            <person name="Haydu L."/>
            <person name="Ho I."/>
            <person name="Huang W."/>
            <person name="Israni S."/>
            <person name="Jett J."/>
            <person name="Kadner K."/>
            <person name="Kimball H."/>
            <person name="Kobayashi A."/>
            <person name="Larionov V."/>
            <person name="Leem S.-H."/>
            <person name="Lopez F."/>
            <person name="Lou Y."/>
            <person name="Lowry S."/>
            <person name="Malfatti S."/>
            <person name="Martinez D."/>
            <person name="McCready P.M."/>
            <person name="Medina C."/>
            <person name="Morgan J."/>
            <person name="Nelson K."/>
            <person name="Nolan M."/>
            <person name="Ovcharenko I."/>
            <person name="Pitluck S."/>
            <person name="Pollard M."/>
            <person name="Popkie A.P."/>
            <person name="Predki P."/>
            <person name="Quan G."/>
            <person name="Ramirez L."/>
            <person name="Rash S."/>
            <person name="Retterer J."/>
            <person name="Rodriguez A."/>
            <person name="Rogers S."/>
            <person name="Salamov A."/>
            <person name="Salazar A."/>
            <person name="She X."/>
            <person name="Smith D."/>
            <person name="Slezak T."/>
            <person name="Solovyev V."/>
            <person name="Thayer N."/>
            <person name="Tice H."/>
            <person name="Tsai M."/>
            <person name="Ustaszewska A."/>
            <person name="Vo N."/>
            <person name="Wagner M."/>
            <person name="Wheeler J."/>
            <person name="Wu K."/>
            <person name="Xie G."/>
            <person name="Yang J."/>
            <person name="Dubchak I."/>
            <person name="Furey T.S."/>
            <person name="DeJong P."/>
            <person name="Dickson M."/>
            <person name="Gordon D."/>
            <person name="Eichler E.E."/>
            <person name="Pennacchio L.A."/>
            <person name="Richardson P."/>
            <person name="Stubbs L."/>
            <person name="Rokhsar D.S."/>
            <person name="Myers R.M."/>
            <person name="Rubin E.M."/>
            <person name="Lucas S.M."/>
        </authorList>
    </citation>
    <scope>NUCLEOTIDE SEQUENCE [LARGE SCALE GENOMIC DNA]</scope>
</reference>
<reference key="4">
    <citation type="journal article" date="2004" name="Genome Res.">
        <title>The status, quality, and expansion of the NIH full-length cDNA project: the Mammalian Gene Collection (MGC).</title>
        <authorList>
            <consortium name="The MGC Project Team"/>
        </authorList>
    </citation>
    <scope>NUCLEOTIDE SEQUENCE [LARGE SCALE MRNA] (ISOFORMS 3 AND 4)</scope>
    <scope>VARIANTS PRO-44; ARG-197; VAL-235; THR-285; THR-359; PRO-610; PHE-648; ARG-823; LEU-835 AND HIS-908</scope>
    <source>
        <tissue>Brain</tissue>
        <tissue>Skin</tissue>
    </source>
</reference>
<reference key="5">
    <citation type="journal article" date="2000" name="DNA Res.">
        <title>Prediction of the coding sequences of unidentified human genes. XIX. The complete sequences of 100 new cDNA clones from brain which code for large proteins in vitro.</title>
        <authorList>
            <person name="Nagase T."/>
            <person name="Kikuno R."/>
            <person name="Hattori A."/>
            <person name="Kondo Y."/>
            <person name="Okumura K."/>
            <person name="Ohara O."/>
        </authorList>
    </citation>
    <scope>NUCLEOTIDE SEQUENCE [LARGE SCALE MRNA] OF 873-1180</scope>
    <scope>VARIANT HIS-908</scope>
    <source>
        <tissue>Brain</tissue>
    </source>
</reference>
<reference key="6">
    <citation type="journal article" date="2022" name="EMBO Mol. Med.">
        <title>IQCN disruption causes fertilization failure and male infertility due to manchette assembly defect.</title>
        <authorList>
            <person name="Dai J."/>
            <person name="Li Q."/>
            <person name="Zhou Q."/>
            <person name="Zhang S."/>
            <person name="Chen J."/>
            <person name="Wang Y."/>
            <person name="Guo J."/>
            <person name="Gu Y."/>
            <person name="Gong F."/>
            <person name="Tan Y."/>
            <person name="Lu G."/>
            <person name="Zheng W."/>
            <person name="Lin G."/>
        </authorList>
    </citation>
    <scope>INVOLVEMENT IN SPGF78</scope>
    <scope>FUNCTION</scope>
    <scope>VARIANT SPGF78 304-GLN--ILE-1180 DEL</scope>
</reference>
<comment type="function">
    <text evidence="1 7">Essential for spermiogenesis and fertilization (PubMed:36321563). May be required for manchette assembly in elongating spermatids (By similarity).</text>
</comment>
<comment type="subunit">
    <text evidence="1">Interacts with calmodulin.</text>
</comment>
<comment type="interaction">
    <interactant intactId="EBI-745878">
        <id>Q9H0B3</id>
    </interactant>
    <interactant intactId="EBI-397435">
        <id>P62158</id>
        <label>CALM3</label>
    </interactant>
    <organismsDiffer>false</organismsDiffer>
    <experiments>4</experiments>
</comment>
<comment type="interaction">
    <interactant intactId="EBI-745878">
        <id>Q9H0B3</id>
    </interactant>
    <interactant intactId="EBI-747537">
        <id>P27482</id>
        <label>CALML3</label>
    </interactant>
    <organismsDiffer>false</organismsDiffer>
    <experiments>4</experiments>
</comment>
<comment type="interaction">
    <interactant intactId="EBI-745878">
        <id>Q9H0B3</id>
    </interactant>
    <interactant intactId="EBI-10171450">
        <id>B4DJ51</id>
        <label>HEL-S-72</label>
    </interactant>
    <organismsDiffer>false</organismsDiffer>
    <experiments>5</experiments>
</comment>
<comment type="interaction">
    <interactant intactId="EBI-745878">
        <id>Q9H0B3</id>
    </interactant>
    <interactant intactId="EBI-741037">
        <id>Q9BRK4</id>
        <label>LZTS2</label>
    </interactant>
    <organismsDiffer>false</organismsDiffer>
    <experiments>4</experiments>
</comment>
<comment type="interaction">
    <interactant intactId="EBI-745878">
        <id>Q9H0B3</id>
    </interactant>
    <interactant intactId="EBI-10172526">
        <id>Q9UJV3-2</id>
        <label>MID2</label>
    </interactant>
    <organismsDiffer>false</organismsDiffer>
    <experiments>3</experiments>
</comment>
<comment type="interaction">
    <interactant intactId="EBI-745878">
        <id>Q9H0B3</id>
    </interactant>
    <interactant intactId="EBI-1053259">
        <id>Q9UHX1</id>
        <label>PUF60</label>
    </interactant>
    <organismsDiffer>false</organismsDiffer>
    <experiments>3</experiments>
</comment>
<comment type="interaction">
    <interactant intactId="EBI-745878">
        <id>Q9H0B3</id>
    </interactant>
    <interactant intactId="EBI-740272">
        <id>Q96I25</id>
        <label>RBM17</label>
    </interactant>
    <organismsDiffer>false</organismsDiffer>
    <experiments>3</experiments>
</comment>
<comment type="interaction">
    <interactant intactId="EBI-745878">
        <id>Q9H0B3</id>
    </interactant>
    <interactant intactId="EBI-747107">
        <id>Q8IUQ4</id>
        <label>SIAH1</label>
    </interactant>
    <organismsDiffer>false</organismsDiffer>
    <experiments>3</experiments>
</comment>
<comment type="interaction">
    <interactant intactId="EBI-745878">
        <id>Q9H0B3</id>
    </interactant>
    <interactant intactId="EBI-719493">
        <id>P14373</id>
        <label>TRIM27</label>
    </interactant>
    <organismsDiffer>false</organismsDiffer>
    <experiments>3</experiments>
</comment>
<comment type="alternative products">
    <event type="alternative splicing"/>
    <isoform>
        <id>Q9H0B3-1</id>
        <name>1</name>
        <sequence type="displayed"/>
    </isoform>
    <isoform>
        <id>Q9H0B3-2</id>
        <name>2</name>
        <sequence type="described" ref="VSP_015474 VSP_015476"/>
    </isoform>
    <isoform>
        <id>Q9H0B3-3</id>
        <name>3</name>
        <sequence type="described" ref="VSP_015473 VSP_015475"/>
    </isoform>
    <isoform>
        <id>Q9H0B3-4</id>
        <name>4</name>
        <sequence type="described" ref="VSP_045714"/>
    </isoform>
    <isoform>
        <id>Q9H0B3-5</id>
        <name>5</name>
        <sequence type="described" ref="VSP_045713"/>
    </isoform>
</comment>
<comment type="disease" evidence="7">
    <disease id="DI-06569">
        <name>Spermatogenic failure 78</name>
        <acronym>SPGF78</acronym>
        <description>An autosomal recessive, male infertility disorder characterized by a high proportion of sperm head anomalies, primarily tapered and microcephalic heads, and an abnormal acrosome structure.</description>
        <dbReference type="MIM" id="620170"/>
    </disease>
    <text>The disease is caused by variants affecting the gene represented in this entry.</text>
</comment>
<comment type="sequence caution" evidence="10">
    <conflict type="erroneous translation">
        <sequence resource="EMBL-CDS" id="BAB21774"/>
    </conflict>
    <text>Wrong choice of frame.</text>
</comment>
<evidence type="ECO:0000250" key="1">
    <source>
        <dbReference type="UniProtKB" id="A0A1D5RMD1"/>
    </source>
</evidence>
<evidence type="ECO:0000255" key="2">
    <source>
        <dbReference type="PROSITE-ProRule" id="PRU00116"/>
    </source>
</evidence>
<evidence type="ECO:0000256" key="3">
    <source>
        <dbReference type="SAM" id="MobiDB-lite"/>
    </source>
</evidence>
<evidence type="ECO:0000269" key="4">
    <source>
    </source>
</evidence>
<evidence type="ECO:0000269" key="5">
    <source>
    </source>
</evidence>
<evidence type="ECO:0000269" key="6">
    <source>
    </source>
</evidence>
<evidence type="ECO:0000269" key="7">
    <source>
    </source>
</evidence>
<evidence type="ECO:0000303" key="8">
    <source>
    </source>
</evidence>
<evidence type="ECO:0000303" key="9">
    <source>
    </source>
</evidence>
<evidence type="ECO:0000305" key="10"/>
<evidence type="ECO:0000312" key="11">
    <source>
        <dbReference type="HGNC" id="HGNC:29350"/>
    </source>
</evidence>
<organism>
    <name type="scientific">Homo sapiens</name>
    <name type="common">Human</name>
    <dbReference type="NCBI Taxonomy" id="9606"/>
    <lineage>
        <taxon>Eukaryota</taxon>
        <taxon>Metazoa</taxon>
        <taxon>Chordata</taxon>
        <taxon>Craniata</taxon>
        <taxon>Vertebrata</taxon>
        <taxon>Euteleostomi</taxon>
        <taxon>Mammalia</taxon>
        <taxon>Eutheria</taxon>
        <taxon>Euarchontoglires</taxon>
        <taxon>Primates</taxon>
        <taxon>Haplorrhini</taxon>
        <taxon>Catarrhini</taxon>
        <taxon>Hominidae</taxon>
        <taxon>Homo</taxon>
    </lineage>
</organism>
<sequence>MTLQGRADLSGNQGNAAGRLATVHEPVVTQWAVHPPAPAHPSLLDKMEKAPPQPQHEGLKSKEHLPQQPAEGKTASRRVPRLRAVVESQAFKNILVDEMDMMHARAATLIQANWRGYWLRQKLISQMMAAKAIQEAWRRFNKRHILHSSKSLVKKTRAEEGDIPYHAPQQVRFQHPEENRLLSPPIMVNKETQFPSCDNLVLCRPQSSPLLQPPAAQGTPEPCVQGPHAARVRGLAFLPHQTVTIRFPCPVSLDAKCQPCLLTRTIRSTCLVHIEGDSVKTKRVSARTNKARAPETPLSRRYDQAVTRPSRAQTQGPVKAETPKAPFQICPGPMITKTLLQTYPVVSVTLPQTYPASTMTTTPPKTSPVPKVTIIKTPAQMYPGPTVTKTAPHTCPMPTMTKIQVHPTASRTGTPRQTCPATITAKNRPQVSLLASIMKSLPQVCPGPAMAKTPPQMHPVTTPAKNPLQTCLSATMSKTSSQRSPVGVTKPSPQTRLPAMITKTPAQLRSVATILKTLCLASPTVANVKAPPQVAVAAGTPNTSGSIHENPPKAKATVNVKQAAKVVKASSPSYLAEGKIRCLAQPHPGTGVPRAAAELPLEAEKIKTGTQKQAKTDMAFKTSVAVEMAGAPSWTKVAEEGDKPPHVYVPVDMAVTLPRGQLAAPLTNASSQRHPPCLSQRPLAAPLTKASSQGHLPTELTKTPSLAHLDTCLSKMHSQTHLATGAVKVQSQAPLATCLTKTQSRGQPITDITTCLIPAHQAADLSSNTHSQVLLTGSKVSNHACQRLGGLSAPPWAKPEDRQTQPQPHGHVPGKTTQGGPCPAACEVQGMLVPPMAPTGHSTCNVESWGDNGATRAQPSMPGQAVPCQEDTGPADAGVVGGQSWNRAWEPARGAASWDTWRNKAVVPPRRSGEPMVSMQAAEEIRILAVITIQAGVRGYLARRRIRLWHRGAMVIQATWRGYRVRRNLAHLCRATTTIQSAWRGYSTRRDQARHWQMLHPVTWVELGSRAGVMSDRSWFQDGRARTVSDHRCFQSCQAHACSVCHSLSSRIGSPPSVVMLVGSSPRTCHTCGRTQPTRVVQGMGQGTEGPGAVSWASAYQLAALSPRQPHRQDKAATAIQSAWRGFKIRQQMRQQQMAAKIVQATWRGHHTRSCLKNTEALLGPADPSASSRHMHWPGI</sequence>
<accession>Q9H0B3</accession>
<accession>B4DYH2</accession>
<accession>E9PDE0</accession>
<accession>E9PH54</accession>
<accession>Q2KHR5</accession>
<accession>Q8N4G8</accession>
<accession>Q96M14</accession>
<accession>Q9C0I0</accession>
<name>IQCN_HUMAN</name>
<gene>
    <name evidence="11" type="primary">IQCN</name>
    <name type="synonym">KIAA1683</name>
</gene>
<keyword id="KW-0025">Alternative splicing</keyword>
<keyword id="KW-0217">Developmental protein</keyword>
<keyword id="KW-0225">Disease variant</keyword>
<keyword id="KW-1267">Proteomics identification</keyword>
<keyword id="KW-1185">Reference proteome</keyword>
<keyword id="KW-0677">Repeat</keyword>
<feature type="chain" id="PRO_0000050801" description="IQ domain-containing protein N">
    <location>
        <begin position="1"/>
        <end position="1180"/>
    </location>
</feature>
<feature type="domain" description="IQ 1" evidence="2">
    <location>
        <begin position="103"/>
        <end position="132"/>
    </location>
</feature>
<feature type="domain" description="IQ 2" evidence="2">
    <location>
        <begin position="926"/>
        <end position="955"/>
    </location>
</feature>
<feature type="domain" description="IQ 3" evidence="2">
    <location>
        <begin position="956"/>
        <end position="978"/>
    </location>
</feature>
<feature type="domain" description="IQ 4" evidence="2">
    <location>
        <begin position="979"/>
        <end position="1001"/>
    </location>
</feature>
<feature type="domain" description="IQ 5" evidence="2">
    <location>
        <begin position="1113"/>
        <end position="1142"/>
    </location>
</feature>
<feature type="domain" description="IQ 6" evidence="2">
    <location>
        <begin position="1143"/>
        <end position="1165"/>
    </location>
</feature>
<feature type="region of interest" description="Disordered" evidence="3">
    <location>
        <begin position="34"/>
        <end position="78"/>
    </location>
</feature>
<feature type="region of interest" description="Disordered" evidence="3">
    <location>
        <begin position="283"/>
        <end position="324"/>
    </location>
</feature>
<feature type="region of interest" description="Disordered" evidence="3">
    <location>
        <begin position="476"/>
        <end position="496"/>
    </location>
</feature>
<feature type="region of interest" description="Disordered" evidence="3">
    <location>
        <begin position="786"/>
        <end position="820"/>
    </location>
</feature>
<feature type="splice variant" id="VSP_015473" description="In isoform 3." evidence="9">
    <location>
        <begin position="1"/>
        <end position="736"/>
    </location>
</feature>
<feature type="splice variant" id="VSP_045713" description="In isoform 5." evidence="8">
    <location>
        <begin position="1"/>
        <end position="46"/>
    </location>
</feature>
<feature type="splice variant" id="VSP_015474" description="In isoform 2." evidence="8">
    <location>
        <begin position="440"/>
        <end position="1053"/>
    </location>
</feature>
<feature type="splice variant" id="VSP_015475" description="In isoform 3." evidence="9">
    <original>TCLTKTQSRGQPITDITTCLIPAHQAADLSSNTHSQVLLTGSKVSNHACQRLGGLSAPPWAKPEDRQTQPQPHGHVPGKTTQGGPCPAACEVQGMLVPPMAPTGHSTCNVESWGDNGATRAQPSMPGQAVPCQEDT</original>
    <variation>MAPSSRWDAMGPKNSYRSVHGRIVPELLESSVARVRPLQYVQRQPSQASARSGANPTHRPSAEVRPVIRTGEMTHSSVIPPLAPGVRRVSLGYESSPSGSLPPLFNQESPWRRQDSYSPQNPAVSHKASLNSTILQ</variation>
    <location>
        <begin position="737"/>
        <end position="872"/>
    </location>
</feature>
<feature type="splice variant" id="VSP_045714" description="In isoform 4." evidence="9">
    <original>T</original>
    <variation>TVGSLLASLCAEVAGVLASQEDLRTLLAKALSQGEVWAALNQALSKEVLGATVTKALPQSMLSMALVKALSWSELRLTLSRALSRGELRAELTKVMQGKLAEVLSKALTEEEWVALSQALCQGELGALLSQSWCRVALRTGTILPKAASKSTGSGVTKTPALVKVACRRSPSAAWGPSLGPVRPQTSK</variation>
    <location>
        <position position="872"/>
    </location>
</feature>
<feature type="splice variant" id="VSP_015476" description="In isoform 2." evidence="8">
    <original>RGHHTRSCLKNTEALLGPADPSASSRHMHWPGI</original>
    <variation>HLGPWLPAVGTSWEALMALWV</variation>
    <location>
        <begin position="1148"/>
        <end position="1180"/>
    </location>
</feature>
<feature type="sequence variant" id="VAR_023418" description="In dbSNP:rs1469023." evidence="5 6">
    <original>L</original>
    <variation>P</variation>
    <location>
        <position position="44"/>
    </location>
</feature>
<feature type="sequence variant" id="VAR_049520" description="In dbSNP:rs3810431.">
    <original>A</original>
    <variation>V</variation>
    <location>
        <position position="50"/>
    </location>
</feature>
<feature type="sequence variant" id="VAR_049521" description="In dbSNP:rs12609001." evidence="6">
    <original>C</original>
    <variation>R</variation>
    <location>
        <position position="197"/>
    </location>
</feature>
<feature type="sequence variant" id="VAR_023419" description="In dbSNP:rs8103906." evidence="5 6">
    <original>L</original>
    <variation>V</variation>
    <location>
        <position position="235"/>
    </location>
</feature>
<feature type="sequence variant" id="VAR_023420" description="In dbSNP:rs8104533." evidence="5 6">
    <original>S</original>
    <variation>T</variation>
    <location>
        <position position="285"/>
    </location>
</feature>
<feature type="sequence variant" id="VAR_087804" description="In SPGF78." evidence="7">
    <location>
        <begin position="304"/>
        <end position="1180"/>
    </location>
</feature>
<feature type="sequence variant" id="VAR_023421" description="In dbSNP:rs3746186." evidence="5 6">
    <original>M</original>
    <variation>T</variation>
    <location>
        <position position="359"/>
    </location>
</feature>
<feature type="sequence variant" id="VAR_049522" description="In dbSNP:rs12462974.">
    <original>T</original>
    <variation>A</variation>
    <location>
        <position position="524"/>
    </location>
</feature>
<feature type="sequence variant" id="VAR_049523" description="In dbSNP:rs2277922." evidence="5 6">
    <original>T</original>
    <variation>P</variation>
    <location>
        <position position="610"/>
    </location>
</feature>
<feature type="sequence variant" id="VAR_049524" description="In dbSNP:rs16982285.">
    <original>A</original>
    <variation>V</variation>
    <location>
        <position position="614"/>
    </location>
</feature>
<feature type="sequence variant" id="VAR_034042" description="In dbSNP:rs8110972." evidence="5 6">
    <original>Y</original>
    <variation>F</variation>
    <location>
        <position position="648"/>
    </location>
</feature>
<feature type="sequence variant" id="VAR_034043" description="In dbSNP:rs12608777." evidence="6">
    <original>P</original>
    <variation>R</variation>
    <location>
        <position position="823"/>
    </location>
</feature>
<feature type="sequence variant" id="VAR_049525" description="In dbSNP:rs2277921." evidence="6">
    <original>P</original>
    <variation>L</variation>
    <location>
        <position position="835"/>
    </location>
</feature>
<feature type="sequence variant" id="VAR_023422" description="In dbSNP:rs999813." evidence="4 5 6">
    <original>P</original>
    <variation>H</variation>
    <location>
        <position position="908"/>
    </location>
</feature>
<feature type="sequence conflict" description="In Ref. 2; BAB71500." evidence="10" ref="2">
    <original>M</original>
    <variation>V</variation>
    <location>
        <position position="381"/>
    </location>
</feature>
<proteinExistence type="evidence at protein level"/>